<name>I4E3A_XENLA</name>
<gene>
    <name type="primary">eif4e3-a</name>
</gene>
<feature type="chain" id="PRO_0000287700" description="Eukaryotic translation initiation factor 4E type 3-A">
    <location>
        <begin position="1"/>
        <end position="218"/>
    </location>
</feature>
<feature type="region of interest" description="Disordered" evidence="2">
    <location>
        <begin position="1"/>
        <end position="21"/>
    </location>
</feature>
<feature type="compositionally biased region" description="Basic and acidic residues" evidence="2">
    <location>
        <begin position="8"/>
        <end position="21"/>
    </location>
</feature>
<feature type="binding site" evidence="1">
    <location>
        <begin position="109"/>
        <end position="110"/>
    </location>
    <ligand>
        <name>mRNA</name>
        <dbReference type="ChEBI" id="CHEBI:33699"/>
    </ligand>
    <ligandPart>
        <name>N(7)-methylguanosine 5'-triphosphate group</name>
        <dbReference type="ChEBI" id="CHEBI:74429"/>
        <note>m7GTP residue in mRNA cap</note>
    </ligandPart>
</feature>
<feature type="binding site" evidence="1">
    <location>
        <begin position="163"/>
        <end position="168"/>
    </location>
    <ligand>
        <name>mRNA</name>
        <dbReference type="ChEBI" id="CHEBI:33699"/>
    </ligand>
    <ligandPart>
        <name>N(7)-methylguanosine 5'-triphosphate group</name>
        <dbReference type="ChEBI" id="CHEBI:74429"/>
        <note>m7GTP residue in mRNA cap</note>
    </ligandPart>
</feature>
<reference key="1">
    <citation type="submission" date="2004-05" db="EMBL/GenBank/DDBJ databases">
        <authorList>
            <consortium name="NIH - Xenopus Gene Collection (XGC) project"/>
        </authorList>
    </citation>
    <scope>NUCLEOTIDE SEQUENCE [LARGE SCALE MRNA]</scope>
    <source>
        <tissue>Embryo</tissue>
    </source>
</reference>
<organism>
    <name type="scientific">Xenopus laevis</name>
    <name type="common">African clawed frog</name>
    <dbReference type="NCBI Taxonomy" id="8355"/>
    <lineage>
        <taxon>Eukaryota</taxon>
        <taxon>Metazoa</taxon>
        <taxon>Chordata</taxon>
        <taxon>Craniata</taxon>
        <taxon>Vertebrata</taxon>
        <taxon>Euteleostomi</taxon>
        <taxon>Amphibia</taxon>
        <taxon>Batrachia</taxon>
        <taxon>Anura</taxon>
        <taxon>Pipoidea</taxon>
        <taxon>Pipidae</taxon>
        <taxon>Xenopodinae</taxon>
        <taxon>Xenopus</taxon>
        <taxon>Xenopus</taxon>
    </lineage>
</organism>
<protein>
    <recommendedName>
        <fullName>Eukaryotic translation initiation factor 4E type 3-A</fullName>
        <shortName>eIF-4E type 3-A</shortName>
        <shortName>eIF-4E3-A</shortName>
        <shortName>eIF4E type 3-A</shortName>
        <shortName>eIF4E-3-A</shortName>
    </recommendedName>
</protein>
<evidence type="ECO:0000250" key="1"/>
<evidence type="ECO:0000256" key="2">
    <source>
        <dbReference type="SAM" id="MobiDB-lite"/>
    </source>
</evidence>
<evidence type="ECO:0000305" key="3"/>
<keyword id="KW-0396">Initiation factor</keyword>
<keyword id="KW-0648">Protein biosynthesis</keyword>
<keyword id="KW-1185">Reference proteome</keyword>
<keyword id="KW-0694">RNA-binding</keyword>
<keyword id="KW-0810">Translation regulation</keyword>
<dbReference type="EMBL" id="BC071126">
    <property type="protein sequence ID" value="AAH71126.1"/>
    <property type="molecule type" value="mRNA"/>
</dbReference>
<dbReference type="RefSeq" id="NP_001085359.1">
    <property type="nucleotide sequence ID" value="NM_001091890.1"/>
</dbReference>
<dbReference type="SMR" id="Q6GR08"/>
<dbReference type="DNASU" id="443785"/>
<dbReference type="GeneID" id="443785"/>
<dbReference type="KEGG" id="xla:443785"/>
<dbReference type="AGR" id="Xenbase:XB-GENE-6251874"/>
<dbReference type="CTD" id="443785"/>
<dbReference type="Xenbase" id="XB-GENE-6251874">
    <property type="gene designation" value="eif4e3.S"/>
</dbReference>
<dbReference type="OrthoDB" id="17977at2759"/>
<dbReference type="Proteomes" id="UP000186698">
    <property type="component" value="Chromosome 4S"/>
</dbReference>
<dbReference type="Bgee" id="443785">
    <property type="expression patterns" value="Expressed in egg cell and 19 other cell types or tissues"/>
</dbReference>
<dbReference type="GO" id="GO:0016281">
    <property type="term" value="C:eukaryotic translation initiation factor 4F complex"/>
    <property type="evidence" value="ECO:0000318"/>
    <property type="project" value="GO_Central"/>
</dbReference>
<dbReference type="GO" id="GO:0000340">
    <property type="term" value="F:RNA 7-methylguanosine cap binding"/>
    <property type="evidence" value="ECO:0000318"/>
    <property type="project" value="GO_Central"/>
</dbReference>
<dbReference type="GO" id="GO:0003743">
    <property type="term" value="F:translation initiation factor activity"/>
    <property type="evidence" value="ECO:0000318"/>
    <property type="project" value="GO_Central"/>
</dbReference>
<dbReference type="GO" id="GO:0006417">
    <property type="term" value="P:regulation of translation"/>
    <property type="evidence" value="ECO:0007669"/>
    <property type="project" value="UniProtKB-KW"/>
</dbReference>
<dbReference type="GO" id="GO:0006413">
    <property type="term" value="P:translational initiation"/>
    <property type="evidence" value="ECO:0000318"/>
    <property type="project" value="GO_Central"/>
</dbReference>
<dbReference type="FunFam" id="3.30.760.10:FF:000007">
    <property type="entry name" value="Eukaryotic translation initiation factor 4E family member 3"/>
    <property type="match status" value="1"/>
</dbReference>
<dbReference type="Gene3D" id="3.30.760.10">
    <property type="entry name" value="RNA Cap, Translation Initiation Factor Eif4e"/>
    <property type="match status" value="1"/>
</dbReference>
<dbReference type="InterPro" id="IPR023398">
    <property type="entry name" value="TIF_eIF4e-like"/>
</dbReference>
<dbReference type="InterPro" id="IPR001040">
    <property type="entry name" value="TIF_eIF_4E"/>
</dbReference>
<dbReference type="PANTHER" id="PTHR11960">
    <property type="entry name" value="EUKARYOTIC TRANSLATION INITIATION FACTOR 4E RELATED"/>
    <property type="match status" value="1"/>
</dbReference>
<dbReference type="PANTHER" id="PTHR11960:SF66">
    <property type="entry name" value="EUKARYOTIC TRANSLATION INITIATION FACTOR 4E TYPE 3"/>
    <property type="match status" value="1"/>
</dbReference>
<dbReference type="Pfam" id="PF01652">
    <property type="entry name" value="IF4E"/>
    <property type="match status" value="1"/>
</dbReference>
<dbReference type="SUPFAM" id="SSF55418">
    <property type="entry name" value="eIF4e-like"/>
    <property type="match status" value="1"/>
</dbReference>
<comment type="function">
    <text evidence="1">Recognizes and binds the 7-methylguanosine-containing mRNA cap during an early step in the initiation of protein synthesis.</text>
</comment>
<comment type="subunit">
    <text evidence="1">eIF4F is a multi-subunit complex, the composition of which varies with external and internal environmental conditions. It is composed of at least eIF4A, eIF4E and eIF4G (By similarity).</text>
</comment>
<comment type="similarity">
    <text evidence="3">Belongs to the eukaryotic initiation factor 4E family.</text>
</comment>
<sequence length="218" mass="24814">MALPAAPADRRLQPEPDEQLHLNHQDIGELGLPQEPDTEGIPLHSPWTFWLDRSLPGTTAAECESNLKKIYTVHTIQSFWSVYNNIPLVTNLPVRWSYHLMRGERKPLWEEESNAKGGVWKMKVPKEASSLVWKELLLATIGEQFTDRCAPEDEVIGVSVSVRDREDIVQVWNGNASVVAEATVLEKIYELLPNTSFKAVFYKPHEEHHAFEGGRSRH</sequence>
<accession>Q6GR08</accession>
<proteinExistence type="evidence at transcript level"/>